<keyword id="KW-0007">Acetylation</keyword>
<keyword id="KW-0010">Activator</keyword>
<keyword id="KW-0053">Apoptosis</keyword>
<keyword id="KW-0217">Developmental protein</keyword>
<keyword id="KW-0221">Differentiation</keyword>
<keyword id="KW-0238">DNA-binding</keyword>
<keyword id="KW-1017">Isopeptide bond</keyword>
<keyword id="KW-0524">Neurogenesis</keyword>
<keyword id="KW-0539">Nucleus</keyword>
<keyword id="KW-0597">Phosphoprotein</keyword>
<keyword id="KW-1185">Reference proteome</keyword>
<keyword id="KW-0804">Transcription</keyword>
<keyword id="KW-0805">Transcription regulation</keyword>
<keyword id="KW-0832">Ubl conjugation</keyword>
<sequence>MGRKKIQITRIMDERNRQVTFTKRKFGLMKKAYELSVLCDCEIALIIFNSSNKLFQYASTDMDKVLLKYTEYNEPHESRTNSDIVEALNKKEHRGCDSPDPDTSYVLTPHTEEKYKKINEEFDNMMRNHKIAPGLPPQNFSMSVTVPVTSPNALSYTNPGSSLVSPSLAASSTLAESSMLSPPPATLHRNVSPGAPQRPPSTGSAGGMLSTTDLTVPNGAGNGPVGNGFVDSRASPNLIGNTGANSVGKVMPTKSPPPPGGGSVGMNSRKPDLRVVIPPSSKGMMPPLNAQRISSSQATQPLATPVVSVTTPSLPPQGLVYSAMPTAYNTDYSLTSADLSALQGFTSPGMLSLGQASAWQQHHLGQAALSSLVAGGQLSQGSNLSINTNQNINIKTEPISPPRDRMTPSGFQQQQQQQPQQQPPPQPPQPQPQPRQEMGRSPVDSLSSSSSSYDGSDREDPRGDFHSPIVLGRPPNAEDRESPSVKRMRMDTWVT</sequence>
<feature type="chain" id="PRO_0000366970" description="Myocyte-specific enhancer factor 2A">
    <location>
        <begin position="1"/>
        <end position="495"/>
    </location>
</feature>
<feature type="domain" description="MADS-box" evidence="5">
    <location>
        <begin position="3"/>
        <end position="57"/>
    </location>
</feature>
<feature type="DNA-binding region" description="Mef2-type" evidence="4">
    <location>
        <begin position="58"/>
        <end position="86"/>
    </location>
</feature>
<feature type="region of interest" description="Disordered" evidence="6">
    <location>
        <begin position="175"/>
        <end position="225"/>
    </location>
</feature>
<feature type="region of interest" description="Disordered" evidence="6">
    <location>
        <begin position="242"/>
        <end position="271"/>
    </location>
</feature>
<feature type="region of interest" description="Required for interaction with MAPKs" evidence="1">
    <location>
        <begin position="266"/>
        <end position="283"/>
    </location>
</feature>
<feature type="region of interest" description="Disordered" evidence="6">
    <location>
        <begin position="382"/>
        <end position="495"/>
    </location>
</feature>
<feature type="compositionally biased region" description="Polar residues" evidence="6">
    <location>
        <begin position="382"/>
        <end position="394"/>
    </location>
</feature>
<feature type="compositionally biased region" description="Pro residues" evidence="6">
    <location>
        <begin position="421"/>
        <end position="433"/>
    </location>
</feature>
<feature type="compositionally biased region" description="Low complexity" evidence="6">
    <location>
        <begin position="441"/>
        <end position="454"/>
    </location>
</feature>
<feature type="compositionally biased region" description="Basic and acidic residues" evidence="6">
    <location>
        <begin position="455"/>
        <end position="465"/>
    </location>
</feature>
<feature type="compositionally biased region" description="Basic and acidic residues" evidence="6">
    <location>
        <begin position="476"/>
        <end position="495"/>
    </location>
</feature>
<feature type="site" description="Cleavage" evidence="10">
    <location>
        <begin position="213"/>
        <end position="214"/>
    </location>
</feature>
<feature type="site" description="Cleavage" evidence="10">
    <location>
        <begin position="454"/>
        <end position="455"/>
    </location>
</feature>
<feature type="modified residue" description="Phosphoserine; by CK2" evidence="1">
    <location>
        <position position="59"/>
    </location>
</feature>
<feature type="modified residue" description="Phosphoserine" evidence="11">
    <location>
        <position position="98"/>
    </location>
</feature>
<feature type="modified residue" description="Phosphoserine" evidence="11">
    <location>
        <position position="235"/>
    </location>
</feature>
<feature type="modified residue" description="N6-acetyllysine" evidence="2">
    <location>
        <position position="249"/>
    </location>
</feature>
<feature type="modified residue" description="Phosphoserine" evidence="11">
    <location>
        <position position="255"/>
    </location>
</feature>
<feature type="modified residue" description="Phosphothreonine; by MAPK7 and MAPK14" evidence="2">
    <location>
        <position position="304"/>
    </location>
</feature>
<feature type="modified residue" description="Phosphothreonine; by MAPK7 and MAPK14" evidence="2">
    <location>
        <position position="311"/>
    </location>
</feature>
<feature type="modified residue" description="Phosphoserine; by MAPK7" evidence="2">
    <location>
        <position position="347"/>
    </location>
</feature>
<feature type="modified residue" description="N6-acetyllysine; alternate" evidence="7">
    <location>
        <position position="395"/>
    </location>
</feature>
<feature type="modified residue" description="Phosphoserine; by CDK5" evidence="7">
    <location>
        <position position="400"/>
    </location>
</feature>
<feature type="modified residue" description="Phosphothreonine" evidence="3">
    <location>
        <position position="407"/>
    </location>
</feature>
<feature type="modified residue" description="Phosphoserine" evidence="2">
    <location>
        <position position="441"/>
    </location>
</feature>
<feature type="cross-link" description="Glycyl lysine isopeptide (Lys-Gly) (interchain with G-Cter in SUMO); alternate">
    <location>
        <position position="395"/>
    </location>
</feature>
<feature type="mutagenesis site" description="Abolishes sumoylation." evidence="7">
    <original>K</original>
    <variation>R</variation>
    <location>
        <position position="395"/>
    </location>
</feature>
<feature type="mutagenesis site" description="Abolishes K-395 sumoylation. Enhances K-395 acetylation. Enhances transcriptional activity." evidence="7">
    <original>S</original>
    <variation>A</variation>
    <location>
        <position position="400"/>
    </location>
</feature>
<feature type="sequence conflict" description="In Ref. 2; AAH81907." evidence="10" ref="2">
    <original>G</original>
    <variation>S</variation>
    <location>
        <position position="223"/>
    </location>
</feature>
<feature type="sequence conflict" description="In Ref. 2; AAH81907." evidence="10" ref="2">
    <original>D</original>
    <variation>N</variation>
    <location>
        <position position="231"/>
    </location>
</feature>
<feature type="sequence conflict" description="In Ref. 2; AAH81907." evidence="10" ref="2">
    <original>T</original>
    <variation>S</variation>
    <location>
        <position position="396"/>
    </location>
</feature>
<comment type="function">
    <text evidence="1 7 8 9">Transcriptional activator which binds specifically to the MEF2 element, 5'-YTA[AT](4)TAR-3', found in numerous muscle-specific genes. Also involved in the activation of numerous growth factor- and stress-induced genes. Mediates cellular functions not only in skeletal and cardiac muscle development, but also in neuronal differentiation and survival. Plays diverse roles in the control of cell growth, survival and apoptosis via p38 MAPK signaling in muscle-specific and/or growth factor-related transcription. In cerebellar granule neurons, phosphorylated and sumoylated MEF2A represses transcription of NUR77 promoting synaptic differentiation. Associates with chromatin to the ZNF16 promoter (By similarity).</text>
</comment>
<comment type="subunit">
    <text evidence="1">Binds DNA as a homo- or heterodimer (By similarity). Dimerizes with MEF2D. Interacts with HDAC7. Interacts with PIAS1; the interaction enhances sumoylation. Interacts with HDAC4, HDAC9 and SLC2A4RG. Interacts (via the N-terminal) with MAPK7; the interaction results in the phosphorylation and transcriptional activity of MEF2A (By similarity).</text>
</comment>
<comment type="subcellular location">
    <subcellularLocation>
        <location evidence="5 8">Nucleus</location>
    </subcellularLocation>
</comment>
<comment type="PTM">
    <text evidence="1">Constitutive phosphorylation on Ser-400 promotes Lys-395 sumoylation thus preventing acetylation at this site. Dephosphorylation on Ser-400 by PPP3CA upon neuron depolarization promotes a switch from sumoylation to acetylation on residue Lys-395 leading to inhibition of dendrite claw differentiation. Phosphorylation on Thr-304 and Thr-311 are the main sites involved in p38 MAPK signaling and activate transcription. Phosphorylated on these sites by MAPK14/p38alpha and MAPK11/p38beta, but not by MAPK13/p38delta nor by MAPK12/p38gamma. Phosphorylation on Ser-400 by CDK5 induced by neurotoxicity inhibits MEF2A transcriptional activation leading to apoptosis of cortical neurons. Phosphorylation on Thr-304, Thr-311 and Ser-347 can be induced by EGF (By similarity).</text>
</comment>
<comment type="PTM">
    <text evidence="1">Sumoylation on Lys-395 is enhanced by PIAS1 and represses transcriptional activity. Phosphorylation on Ser-400 is required for sumoylation. Has no effect on nuclear location nor on DNA binding. Sumoylated with SUMO1 and, to a lesser extent with SUMO2 and SUMO3. PIASx facilitates sumoylation in postsynaptic dendrites in the cerebellar cortex and promotes their morphogenesis (By similarity).</text>
</comment>
<comment type="PTM">
    <text evidence="1 7">Acetylation on Lys-395 activates transcriptional activity. Acetylated by p300 on several sites in diffentiating myocytes. Acetylation on Lys-4 increases DNA binding and transactivation (By similarity). Hyperacetylation by p300 leads to enhanced cardiac myocyte growth and heart failure.</text>
</comment>
<comment type="PTM">
    <text evidence="1">Proteolytically cleaved in cerebellar granule neurons on several sites by caspase 3 and caspase 7 following neurotoxicity. Preferentially cleaves the CDK5-mediated hyperphosphorylated form which leads to neuron apoptosis and transcriptional inactivation (By similarity).</text>
</comment>
<dbReference type="EMBL" id="DQ323505">
    <property type="protein sequence ID" value="ABC55063.1"/>
    <property type="molecule type" value="mRNA"/>
</dbReference>
<dbReference type="EMBL" id="BC081907">
    <property type="protein sequence ID" value="AAH81907.1"/>
    <property type="molecule type" value="mRNA"/>
</dbReference>
<dbReference type="RefSeq" id="NP_001014057.1">
    <property type="nucleotide sequence ID" value="NM_001014035.1"/>
</dbReference>
<dbReference type="RefSeq" id="XP_017444797.1">
    <property type="nucleotide sequence ID" value="XM_017589308.1"/>
</dbReference>
<dbReference type="SMR" id="Q2MJT0"/>
<dbReference type="FunCoup" id="Q2MJT0">
    <property type="interactions" value="1655"/>
</dbReference>
<dbReference type="MINT" id="Q2MJT0"/>
<dbReference type="STRING" id="10116.ENSRNOP00000068554"/>
<dbReference type="iPTMnet" id="Q2MJT0"/>
<dbReference type="PhosphoSitePlus" id="Q2MJT0"/>
<dbReference type="PaxDb" id="10116-ENSRNOP00000065122"/>
<dbReference type="GeneID" id="309957"/>
<dbReference type="KEGG" id="rno:309957"/>
<dbReference type="AGR" id="RGD:1359360"/>
<dbReference type="CTD" id="4205"/>
<dbReference type="RGD" id="1359360">
    <property type="gene designation" value="Mef2a"/>
</dbReference>
<dbReference type="eggNOG" id="KOG0014">
    <property type="taxonomic scope" value="Eukaryota"/>
</dbReference>
<dbReference type="InParanoid" id="Q2MJT0"/>
<dbReference type="PhylomeDB" id="Q2MJT0"/>
<dbReference type="Reactome" id="R-RNO-525793">
    <property type="pathway name" value="Myogenesis"/>
</dbReference>
<dbReference type="PRO" id="PR:Q2MJT0"/>
<dbReference type="Proteomes" id="UP000002494">
    <property type="component" value="Unplaced"/>
</dbReference>
<dbReference type="GO" id="GO:0000785">
    <property type="term" value="C:chromatin"/>
    <property type="evidence" value="ECO:0000266"/>
    <property type="project" value="RGD"/>
</dbReference>
<dbReference type="GO" id="GO:0005654">
    <property type="term" value="C:nucleoplasm"/>
    <property type="evidence" value="ECO:0000304"/>
    <property type="project" value="Reactome"/>
</dbReference>
<dbReference type="GO" id="GO:0005634">
    <property type="term" value="C:nucleus"/>
    <property type="evidence" value="ECO:0000314"/>
    <property type="project" value="UniProtKB"/>
</dbReference>
<dbReference type="GO" id="GO:0005667">
    <property type="term" value="C:transcription regulator complex"/>
    <property type="evidence" value="ECO:0000266"/>
    <property type="project" value="RGD"/>
</dbReference>
<dbReference type="GO" id="GO:0003682">
    <property type="term" value="F:chromatin binding"/>
    <property type="evidence" value="ECO:0000250"/>
    <property type="project" value="UniProtKB"/>
</dbReference>
<dbReference type="GO" id="GO:0003677">
    <property type="term" value="F:DNA binding"/>
    <property type="evidence" value="ECO:0000266"/>
    <property type="project" value="RGD"/>
</dbReference>
<dbReference type="GO" id="GO:0001228">
    <property type="term" value="F:DNA-binding transcription activator activity, RNA polymerase II-specific"/>
    <property type="evidence" value="ECO:0000266"/>
    <property type="project" value="RGD"/>
</dbReference>
<dbReference type="GO" id="GO:0003700">
    <property type="term" value="F:DNA-binding transcription factor activity"/>
    <property type="evidence" value="ECO:0000266"/>
    <property type="project" value="RGD"/>
</dbReference>
<dbReference type="GO" id="GO:0000981">
    <property type="term" value="F:DNA-binding transcription factor activity, RNA polymerase II-specific"/>
    <property type="evidence" value="ECO:0000314"/>
    <property type="project" value="UniProtKB"/>
</dbReference>
<dbReference type="GO" id="GO:0140297">
    <property type="term" value="F:DNA-binding transcription factor binding"/>
    <property type="evidence" value="ECO:0000250"/>
    <property type="project" value="UniProtKB"/>
</dbReference>
<dbReference type="GO" id="GO:0035035">
    <property type="term" value="F:histone acetyltransferase binding"/>
    <property type="evidence" value="ECO:0000250"/>
    <property type="project" value="UniProtKB"/>
</dbReference>
<dbReference type="GO" id="GO:0042826">
    <property type="term" value="F:histone deacetylase binding"/>
    <property type="evidence" value="ECO:0000250"/>
    <property type="project" value="UniProtKB"/>
</dbReference>
<dbReference type="GO" id="GO:0046982">
    <property type="term" value="F:protein heterodimerization activity"/>
    <property type="evidence" value="ECO:0000266"/>
    <property type="project" value="RGD"/>
</dbReference>
<dbReference type="GO" id="GO:0019901">
    <property type="term" value="F:protein kinase binding"/>
    <property type="evidence" value="ECO:0000266"/>
    <property type="project" value="RGD"/>
</dbReference>
<dbReference type="GO" id="GO:0000978">
    <property type="term" value="F:RNA polymerase II cis-regulatory region sequence-specific DNA binding"/>
    <property type="evidence" value="ECO:0000266"/>
    <property type="project" value="RGD"/>
</dbReference>
<dbReference type="GO" id="GO:0000977">
    <property type="term" value="F:RNA polymerase II transcription regulatory region sequence-specific DNA binding"/>
    <property type="evidence" value="ECO:0000250"/>
    <property type="project" value="UniProtKB"/>
</dbReference>
<dbReference type="GO" id="GO:0061629">
    <property type="term" value="F:RNA polymerase II-specific DNA-binding transcription factor binding"/>
    <property type="evidence" value="ECO:0000266"/>
    <property type="project" value="RGD"/>
</dbReference>
<dbReference type="GO" id="GO:0043565">
    <property type="term" value="F:sequence-specific DNA binding"/>
    <property type="evidence" value="ECO:0000314"/>
    <property type="project" value="UniProtKB"/>
</dbReference>
<dbReference type="GO" id="GO:0046332">
    <property type="term" value="F:SMAD binding"/>
    <property type="evidence" value="ECO:0000250"/>
    <property type="project" value="UniProtKB"/>
</dbReference>
<dbReference type="GO" id="GO:0006915">
    <property type="term" value="P:apoptotic process"/>
    <property type="evidence" value="ECO:0007669"/>
    <property type="project" value="UniProtKB-KW"/>
</dbReference>
<dbReference type="GO" id="GO:0061337">
    <property type="term" value="P:cardiac conduction"/>
    <property type="evidence" value="ECO:0000266"/>
    <property type="project" value="RGD"/>
</dbReference>
<dbReference type="GO" id="GO:0030154">
    <property type="term" value="P:cell differentiation"/>
    <property type="evidence" value="ECO:0000318"/>
    <property type="project" value="GO_Central"/>
</dbReference>
<dbReference type="GO" id="GO:0071277">
    <property type="term" value="P:cellular response to calcium ion"/>
    <property type="evidence" value="ECO:0000314"/>
    <property type="project" value="UniProtKB"/>
</dbReference>
<dbReference type="GO" id="GO:0071333">
    <property type="term" value="P:cellular response to glucose stimulus"/>
    <property type="evidence" value="ECO:0000270"/>
    <property type="project" value="RGD"/>
</dbReference>
<dbReference type="GO" id="GO:0048813">
    <property type="term" value="P:dendrite morphogenesis"/>
    <property type="evidence" value="ECO:0000315"/>
    <property type="project" value="UniProtKB"/>
</dbReference>
<dbReference type="GO" id="GO:0006351">
    <property type="term" value="P:DNA-templated transcription"/>
    <property type="evidence" value="ECO:0000266"/>
    <property type="project" value="RGD"/>
</dbReference>
<dbReference type="GO" id="GO:0070375">
    <property type="term" value="P:ERK5 cascade"/>
    <property type="evidence" value="ECO:0000250"/>
    <property type="project" value="UniProtKB"/>
</dbReference>
<dbReference type="GO" id="GO:0007507">
    <property type="term" value="P:heart development"/>
    <property type="evidence" value="ECO:0000266"/>
    <property type="project" value="RGD"/>
</dbReference>
<dbReference type="GO" id="GO:0000165">
    <property type="term" value="P:MAPK cascade"/>
    <property type="evidence" value="ECO:0000250"/>
    <property type="project" value="UniProtKB"/>
</dbReference>
<dbReference type="GO" id="GO:0000002">
    <property type="term" value="P:mitochondrial genome maintenance"/>
    <property type="evidence" value="ECO:0000266"/>
    <property type="project" value="RGD"/>
</dbReference>
<dbReference type="GO" id="GO:0048311">
    <property type="term" value="P:mitochondrion distribution"/>
    <property type="evidence" value="ECO:0000266"/>
    <property type="project" value="RGD"/>
</dbReference>
<dbReference type="GO" id="GO:0000122">
    <property type="term" value="P:negative regulation of transcription by RNA polymerase II"/>
    <property type="evidence" value="ECO:0000250"/>
    <property type="project" value="UniProtKB"/>
</dbReference>
<dbReference type="GO" id="GO:0010613">
    <property type="term" value="P:positive regulation of cardiac muscle hypertrophy"/>
    <property type="evidence" value="ECO:0000266"/>
    <property type="project" value="RGD"/>
</dbReference>
<dbReference type="GO" id="GO:0046326">
    <property type="term" value="P:positive regulation of D-glucose import"/>
    <property type="evidence" value="ECO:0000266"/>
    <property type="project" value="RGD"/>
</dbReference>
<dbReference type="GO" id="GO:0045893">
    <property type="term" value="P:positive regulation of DNA-templated transcription"/>
    <property type="evidence" value="ECO:0000315"/>
    <property type="project" value="UniProtKB"/>
</dbReference>
<dbReference type="GO" id="GO:0010628">
    <property type="term" value="P:positive regulation of gene expression"/>
    <property type="evidence" value="ECO:0000266"/>
    <property type="project" value="RGD"/>
</dbReference>
<dbReference type="GO" id="GO:0045944">
    <property type="term" value="P:positive regulation of transcription by RNA polymerase II"/>
    <property type="evidence" value="ECO:0000314"/>
    <property type="project" value="UniProtKB"/>
</dbReference>
<dbReference type="GO" id="GO:0006355">
    <property type="term" value="P:regulation of DNA-templated transcription"/>
    <property type="evidence" value="ECO:0000266"/>
    <property type="project" value="RGD"/>
</dbReference>
<dbReference type="GO" id="GO:0055005">
    <property type="term" value="P:ventricular cardiac myofibril assembly"/>
    <property type="evidence" value="ECO:0000266"/>
    <property type="project" value="RGD"/>
</dbReference>
<dbReference type="CDD" id="cd00265">
    <property type="entry name" value="MADS_MEF2_like"/>
    <property type="match status" value="1"/>
</dbReference>
<dbReference type="FunFam" id="3.40.1810.10:FF:000001">
    <property type="entry name" value="Myocyte-specific enhancer factor 2A homolog"/>
    <property type="match status" value="1"/>
</dbReference>
<dbReference type="Gene3D" id="3.40.1810.10">
    <property type="entry name" value="Transcription factor, MADS-box"/>
    <property type="match status" value="1"/>
</dbReference>
<dbReference type="InterPro" id="IPR022102">
    <property type="entry name" value="HJURP_C"/>
</dbReference>
<dbReference type="InterPro" id="IPR033896">
    <property type="entry name" value="MEF2-like_N"/>
</dbReference>
<dbReference type="InterPro" id="IPR002100">
    <property type="entry name" value="TF_MADSbox"/>
</dbReference>
<dbReference type="InterPro" id="IPR036879">
    <property type="entry name" value="TF_MADSbox_sf"/>
</dbReference>
<dbReference type="PANTHER" id="PTHR11945">
    <property type="entry name" value="MADS BOX PROTEIN"/>
    <property type="match status" value="1"/>
</dbReference>
<dbReference type="PANTHER" id="PTHR11945:SF637">
    <property type="entry name" value="MYOCYTE-SPECIFIC ENHANCER FACTOR 2A"/>
    <property type="match status" value="1"/>
</dbReference>
<dbReference type="Pfam" id="PF12347">
    <property type="entry name" value="HJURP_C"/>
    <property type="match status" value="1"/>
</dbReference>
<dbReference type="Pfam" id="PF00319">
    <property type="entry name" value="SRF-TF"/>
    <property type="match status" value="1"/>
</dbReference>
<dbReference type="PRINTS" id="PR00404">
    <property type="entry name" value="MADSDOMAIN"/>
</dbReference>
<dbReference type="SMART" id="SM00432">
    <property type="entry name" value="MADS"/>
    <property type="match status" value="1"/>
</dbReference>
<dbReference type="SUPFAM" id="SSF55455">
    <property type="entry name" value="SRF-like"/>
    <property type="match status" value="1"/>
</dbReference>
<dbReference type="PROSITE" id="PS00350">
    <property type="entry name" value="MADS_BOX_1"/>
    <property type="match status" value="1"/>
</dbReference>
<dbReference type="PROSITE" id="PS50066">
    <property type="entry name" value="MADS_BOX_2"/>
    <property type="match status" value="1"/>
</dbReference>
<accession>Q2MJT0</accession>
<accession>Q66HD7</accession>
<protein>
    <recommendedName>
        <fullName>Myocyte-specific enhancer factor 2A</fullName>
    </recommendedName>
</protein>
<organism>
    <name type="scientific">Rattus norvegicus</name>
    <name type="common">Rat</name>
    <dbReference type="NCBI Taxonomy" id="10116"/>
    <lineage>
        <taxon>Eukaryota</taxon>
        <taxon>Metazoa</taxon>
        <taxon>Chordata</taxon>
        <taxon>Craniata</taxon>
        <taxon>Vertebrata</taxon>
        <taxon>Euteleostomi</taxon>
        <taxon>Mammalia</taxon>
        <taxon>Eutheria</taxon>
        <taxon>Euarchontoglires</taxon>
        <taxon>Glires</taxon>
        <taxon>Rodentia</taxon>
        <taxon>Myomorpha</taxon>
        <taxon>Muroidea</taxon>
        <taxon>Muridae</taxon>
        <taxon>Murinae</taxon>
        <taxon>Rattus</taxon>
    </lineage>
</organism>
<name>MEF2A_RAT</name>
<evidence type="ECO:0000250" key="1"/>
<evidence type="ECO:0000250" key="2">
    <source>
        <dbReference type="UniProtKB" id="Q02078"/>
    </source>
</evidence>
<evidence type="ECO:0000250" key="3">
    <source>
        <dbReference type="UniProtKB" id="Q60929"/>
    </source>
</evidence>
<evidence type="ECO:0000255" key="4"/>
<evidence type="ECO:0000255" key="5">
    <source>
        <dbReference type="PROSITE-ProRule" id="PRU00251"/>
    </source>
</evidence>
<evidence type="ECO:0000256" key="6">
    <source>
        <dbReference type="SAM" id="MobiDB-lite"/>
    </source>
</evidence>
<evidence type="ECO:0000269" key="7">
    <source>
    </source>
</evidence>
<evidence type="ECO:0000269" key="8">
    <source>
    </source>
</evidence>
<evidence type="ECO:0000269" key="9">
    <source>
    </source>
</evidence>
<evidence type="ECO:0000305" key="10"/>
<evidence type="ECO:0007744" key="11">
    <source>
    </source>
</evidence>
<reference key="1">
    <citation type="journal article" date="2007" name="Cardiovasc. Res.">
        <title>Bone morphogenetic protein-2 acts upstream of myocyte-specific enhancer factor 2a to control embryonic cardiac contractility.</title>
        <authorList>
            <person name="Wang Y.-X."/>
            <person name="Qian L.-X."/>
            <person name="Liu D."/>
            <person name="Yao L.-L."/>
            <person name="Jiang Q."/>
            <person name="Yu Z."/>
            <person name="Gui Y.-H."/>
            <person name="Zhong T.-P."/>
            <person name="Song H.-Y."/>
        </authorList>
    </citation>
    <scope>NUCLEOTIDE SEQUENCE [MRNA]</scope>
    <scope>SUBCELLULAR LOCATION</scope>
    <scope>FUNCTION</scope>
    <source>
        <strain>Sprague-Dawley</strain>
    </source>
</reference>
<reference key="2">
    <citation type="journal article" date="2004" name="Genome Res.">
        <title>The status, quality, and expansion of the NIH full-length cDNA project: the Mammalian Gene Collection (MGC).</title>
        <authorList>
            <consortium name="The MGC Project Team"/>
        </authorList>
    </citation>
    <scope>NUCLEOTIDE SEQUENCE [LARGE SCALE MRNA]</scope>
    <source>
        <tissue>Testis</tissue>
    </source>
</reference>
<reference key="3">
    <citation type="journal article" date="2006" name="Science">
        <title>A calcium-regulated MEF2 sumoylation switch controls postsynaptic differentiation.</title>
        <authorList>
            <person name="Shalizi A."/>
            <person name="Gaudilliere B."/>
            <person name="Yuan Z."/>
            <person name="Stegmueller J."/>
            <person name="Shirogane T."/>
            <person name="Ge Q."/>
            <person name="Tan Y."/>
            <person name="Schulman B."/>
            <person name="Harper J.W."/>
            <person name="Bonni A."/>
        </authorList>
    </citation>
    <scope>FUNCTION</scope>
    <scope>PHOSPHORYLATION AT SER-400</scope>
    <scope>SUMOYLATION AT LYS-395</scope>
    <scope>ACETYLATION AT LYS-395</scope>
    <scope>MUTAGENESIS OF LYS-395 AND SER-400</scope>
</reference>
<reference key="4">
    <citation type="journal article" date="2007" name="J. Neurosci.">
        <title>PIASx is a MEF2 SUMO E3 ligase that promotes postsynaptic dendritic morphogenesis.</title>
        <authorList>
            <person name="Shalizi A."/>
            <person name="Bilimoria P.M."/>
            <person name="Stegmueller J."/>
            <person name="Gaudilliere B."/>
            <person name="Yang Y."/>
            <person name="Shuai K."/>
            <person name="Bonni A."/>
        </authorList>
    </citation>
    <scope>SUMOYLATION</scope>
    <scope>FUNCTION</scope>
</reference>
<reference key="5">
    <citation type="journal article" date="2012" name="Nat. Commun.">
        <title>Quantitative maps of protein phosphorylation sites across 14 different rat organs and tissues.</title>
        <authorList>
            <person name="Lundby A."/>
            <person name="Secher A."/>
            <person name="Lage K."/>
            <person name="Nordsborg N.B."/>
            <person name="Dmytriyev A."/>
            <person name="Lundby C."/>
            <person name="Olsen J.V."/>
        </authorList>
    </citation>
    <scope>PHOSPHORYLATION [LARGE SCALE ANALYSIS] AT SER-98; SER-235 AND SER-255</scope>
    <scope>IDENTIFICATION BY MASS SPECTROMETRY [LARGE SCALE ANALYSIS]</scope>
</reference>
<gene>
    <name type="primary">Mef2a</name>
</gene>
<proteinExistence type="evidence at protein level"/>